<evidence type="ECO:0000255" key="1">
    <source>
        <dbReference type="HAMAP-Rule" id="MF_00300"/>
    </source>
</evidence>
<protein>
    <recommendedName>
        <fullName evidence="1">Chorismate synthase</fullName>
        <shortName evidence="1">CS</shortName>
        <ecNumber evidence="1">4.2.3.5</ecNumber>
    </recommendedName>
    <alternativeName>
        <fullName evidence="1">5-enolpyruvylshikimate-3-phosphate phospholyase</fullName>
    </alternativeName>
</protein>
<accession>Q4FN06</accession>
<name>AROC_PELUB</name>
<sequence>MSFNTFGKQFRFTTWGESHGPALGCVVDGCPPNINLKEQDIQVELDKRKPGQSKFTTQRKEDDKVQILSGVFEGKTTGTPISLIIYNQDMRSKDYGDIKDKFRPGHADFTYFKKYGIRDYRGGGRSSARETAARVAAGAIAKKVLENKLGKKFKVVGAVTQLGILGCDTRKWNDLTINKNPFFCPDKNMLKLWEKYLLDIRKSGSSCGAVIEVRARGIPVGLGAPIYSKLDMDIASAMMSINAVKGVNIGSGMNSAQLSGEQNSDEISQKGKKLKFDSNNAGGILGGISTGQEIVVSFAVKPTSSILTTRKTINKFGKNTTISVKGRHDPCVGIRAVPVGEAMMNCVLLDHYLMNKAQCS</sequence>
<dbReference type="EC" id="4.2.3.5" evidence="1"/>
<dbReference type="EMBL" id="CP000084">
    <property type="protein sequence ID" value="AAZ21433.1"/>
    <property type="molecule type" value="Genomic_DNA"/>
</dbReference>
<dbReference type="RefSeq" id="WP_006997292.1">
    <property type="nucleotide sequence ID" value="NC_007205.1"/>
</dbReference>
<dbReference type="SMR" id="Q4FN06"/>
<dbReference type="STRING" id="335992.SAR11_0612"/>
<dbReference type="GeneID" id="66295118"/>
<dbReference type="KEGG" id="pub:SAR11_0612"/>
<dbReference type="eggNOG" id="COG0082">
    <property type="taxonomic scope" value="Bacteria"/>
</dbReference>
<dbReference type="HOGENOM" id="CLU_034547_0_0_5"/>
<dbReference type="OrthoDB" id="9771806at2"/>
<dbReference type="UniPathway" id="UPA00053">
    <property type="reaction ID" value="UER00090"/>
</dbReference>
<dbReference type="Proteomes" id="UP000002528">
    <property type="component" value="Chromosome"/>
</dbReference>
<dbReference type="GO" id="GO:0005829">
    <property type="term" value="C:cytosol"/>
    <property type="evidence" value="ECO:0007669"/>
    <property type="project" value="TreeGrafter"/>
</dbReference>
<dbReference type="GO" id="GO:0004107">
    <property type="term" value="F:chorismate synthase activity"/>
    <property type="evidence" value="ECO:0007669"/>
    <property type="project" value="UniProtKB-UniRule"/>
</dbReference>
<dbReference type="GO" id="GO:0010181">
    <property type="term" value="F:FMN binding"/>
    <property type="evidence" value="ECO:0007669"/>
    <property type="project" value="TreeGrafter"/>
</dbReference>
<dbReference type="GO" id="GO:0008652">
    <property type="term" value="P:amino acid biosynthetic process"/>
    <property type="evidence" value="ECO:0007669"/>
    <property type="project" value="UniProtKB-KW"/>
</dbReference>
<dbReference type="GO" id="GO:0009073">
    <property type="term" value="P:aromatic amino acid family biosynthetic process"/>
    <property type="evidence" value="ECO:0007669"/>
    <property type="project" value="UniProtKB-KW"/>
</dbReference>
<dbReference type="GO" id="GO:0009423">
    <property type="term" value="P:chorismate biosynthetic process"/>
    <property type="evidence" value="ECO:0007669"/>
    <property type="project" value="UniProtKB-UniRule"/>
</dbReference>
<dbReference type="CDD" id="cd07304">
    <property type="entry name" value="Chorismate_synthase"/>
    <property type="match status" value="1"/>
</dbReference>
<dbReference type="Gene3D" id="3.60.150.10">
    <property type="entry name" value="Chorismate synthase AroC"/>
    <property type="match status" value="1"/>
</dbReference>
<dbReference type="HAMAP" id="MF_00300">
    <property type="entry name" value="Chorismate_synth"/>
    <property type="match status" value="1"/>
</dbReference>
<dbReference type="InterPro" id="IPR000453">
    <property type="entry name" value="Chorismate_synth"/>
</dbReference>
<dbReference type="InterPro" id="IPR035904">
    <property type="entry name" value="Chorismate_synth_AroC_sf"/>
</dbReference>
<dbReference type="InterPro" id="IPR020541">
    <property type="entry name" value="Chorismate_synthase_CS"/>
</dbReference>
<dbReference type="NCBIfam" id="TIGR00033">
    <property type="entry name" value="aroC"/>
    <property type="match status" value="1"/>
</dbReference>
<dbReference type="NCBIfam" id="NF003793">
    <property type="entry name" value="PRK05382.1"/>
    <property type="match status" value="1"/>
</dbReference>
<dbReference type="PANTHER" id="PTHR21085">
    <property type="entry name" value="CHORISMATE SYNTHASE"/>
    <property type="match status" value="1"/>
</dbReference>
<dbReference type="PANTHER" id="PTHR21085:SF0">
    <property type="entry name" value="CHORISMATE SYNTHASE"/>
    <property type="match status" value="1"/>
</dbReference>
<dbReference type="Pfam" id="PF01264">
    <property type="entry name" value="Chorismate_synt"/>
    <property type="match status" value="1"/>
</dbReference>
<dbReference type="PIRSF" id="PIRSF001456">
    <property type="entry name" value="Chorismate_synth"/>
    <property type="match status" value="1"/>
</dbReference>
<dbReference type="SUPFAM" id="SSF103263">
    <property type="entry name" value="Chorismate synthase, AroC"/>
    <property type="match status" value="1"/>
</dbReference>
<dbReference type="PROSITE" id="PS00787">
    <property type="entry name" value="CHORISMATE_SYNTHASE_1"/>
    <property type="match status" value="1"/>
</dbReference>
<dbReference type="PROSITE" id="PS00788">
    <property type="entry name" value="CHORISMATE_SYNTHASE_2"/>
    <property type="match status" value="1"/>
</dbReference>
<dbReference type="PROSITE" id="PS00789">
    <property type="entry name" value="CHORISMATE_SYNTHASE_3"/>
    <property type="match status" value="1"/>
</dbReference>
<gene>
    <name evidence="1" type="primary">aroC</name>
    <name type="ordered locus">SAR11_0612</name>
</gene>
<reference key="1">
    <citation type="journal article" date="2005" name="Science">
        <title>Genome streamlining in a cosmopolitan oceanic bacterium.</title>
        <authorList>
            <person name="Giovannoni S.J."/>
            <person name="Tripp H.J."/>
            <person name="Givan S."/>
            <person name="Podar M."/>
            <person name="Vergin K.L."/>
            <person name="Baptista D."/>
            <person name="Bibbs L."/>
            <person name="Eads J."/>
            <person name="Richardson T.H."/>
            <person name="Noordewier M."/>
            <person name="Rappe M.S."/>
            <person name="Short J.M."/>
            <person name="Carrington J.C."/>
            <person name="Mathur E.J."/>
        </authorList>
    </citation>
    <scope>NUCLEOTIDE SEQUENCE [LARGE SCALE GENOMIC DNA]</scope>
    <source>
        <strain>HTCC1062</strain>
    </source>
</reference>
<keyword id="KW-0028">Amino-acid biosynthesis</keyword>
<keyword id="KW-0057">Aromatic amino acid biosynthesis</keyword>
<keyword id="KW-0274">FAD</keyword>
<keyword id="KW-0285">Flavoprotein</keyword>
<keyword id="KW-0288">FMN</keyword>
<keyword id="KW-0456">Lyase</keyword>
<keyword id="KW-0521">NADP</keyword>
<keyword id="KW-1185">Reference proteome</keyword>
<feature type="chain" id="PRO_0000256311" description="Chorismate synthase">
    <location>
        <begin position="1"/>
        <end position="360"/>
    </location>
</feature>
<feature type="binding site" evidence="1">
    <location>
        <position position="48"/>
    </location>
    <ligand>
        <name>NADP(+)</name>
        <dbReference type="ChEBI" id="CHEBI:58349"/>
    </ligand>
</feature>
<feature type="binding site" evidence="1">
    <location>
        <begin position="125"/>
        <end position="127"/>
    </location>
    <ligand>
        <name>FMN</name>
        <dbReference type="ChEBI" id="CHEBI:58210"/>
    </ligand>
</feature>
<feature type="binding site" evidence="1">
    <location>
        <begin position="242"/>
        <end position="243"/>
    </location>
    <ligand>
        <name>FMN</name>
        <dbReference type="ChEBI" id="CHEBI:58210"/>
    </ligand>
</feature>
<feature type="binding site" evidence="1">
    <location>
        <position position="286"/>
    </location>
    <ligand>
        <name>FMN</name>
        <dbReference type="ChEBI" id="CHEBI:58210"/>
    </ligand>
</feature>
<feature type="binding site" evidence="1">
    <location>
        <begin position="301"/>
        <end position="305"/>
    </location>
    <ligand>
        <name>FMN</name>
        <dbReference type="ChEBI" id="CHEBI:58210"/>
    </ligand>
</feature>
<feature type="binding site" evidence="1">
    <location>
        <position position="327"/>
    </location>
    <ligand>
        <name>FMN</name>
        <dbReference type="ChEBI" id="CHEBI:58210"/>
    </ligand>
</feature>
<organism>
    <name type="scientific">Pelagibacter ubique (strain HTCC1062)</name>
    <dbReference type="NCBI Taxonomy" id="335992"/>
    <lineage>
        <taxon>Bacteria</taxon>
        <taxon>Pseudomonadati</taxon>
        <taxon>Pseudomonadota</taxon>
        <taxon>Alphaproteobacteria</taxon>
        <taxon>Candidatus Pelagibacterales</taxon>
        <taxon>Candidatus Pelagibacteraceae</taxon>
        <taxon>Candidatus Pelagibacter</taxon>
    </lineage>
</organism>
<proteinExistence type="inferred from homology"/>
<comment type="function">
    <text evidence="1">Catalyzes the anti-1,4-elimination of the C-3 phosphate and the C-6 proR hydrogen from 5-enolpyruvylshikimate-3-phosphate (EPSP) to yield chorismate, which is the branch point compound that serves as the starting substrate for the three terminal pathways of aromatic amino acid biosynthesis. This reaction introduces a second double bond into the aromatic ring system.</text>
</comment>
<comment type="catalytic activity">
    <reaction evidence="1">
        <text>5-O-(1-carboxyvinyl)-3-phosphoshikimate = chorismate + phosphate</text>
        <dbReference type="Rhea" id="RHEA:21020"/>
        <dbReference type="ChEBI" id="CHEBI:29748"/>
        <dbReference type="ChEBI" id="CHEBI:43474"/>
        <dbReference type="ChEBI" id="CHEBI:57701"/>
        <dbReference type="EC" id="4.2.3.5"/>
    </reaction>
</comment>
<comment type="cofactor">
    <cofactor evidence="1">
        <name>FMNH2</name>
        <dbReference type="ChEBI" id="CHEBI:57618"/>
    </cofactor>
    <text evidence="1">Reduced FMN (FMNH(2)).</text>
</comment>
<comment type="pathway">
    <text evidence="1">Metabolic intermediate biosynthesis; chorismate biosynthesis; chorismate from D-erythrose 4-phosphate and phosphoenolpyruvate: step 7/7.</text>
</comment>
<comment type="subunit">
    <text evidence="1">Homotetramer.</text>
</comment>
<comment type="similarity">
    <text evidence="1">Belongs to the chorismate synthase family.</text>
</comment>